<proteinExistence type="evidence at transcript level"/>
<organism>
    <name type="scientific">Arabidopsis thaliana</name>
    <name type="common">Mouse-ear cress</name>
    <dbReference type="NCBI Taxonomy" id="3702"/>
    <lineage>
        <taxon>Eukaryota</taxon>
        <taxon>Viridiplantae</taxon>
        <taxon>Streptophyta</taxon>
        <taxon>Embryophyta</taxon>
        <taxon>Tracheophyta</taxon>
        <taxon>Spermatophyta</taxon>
        <taxon>Magnoliopsida</taxon>
        <taxon>eudicotyledons</taxon>
        <taxon>Gunneridae</taxon>
        <taxon>Pentapetalae</taxon>
        <taxon>rosids</taxon>
        <taxon>malvids</taxon>
        <taxon>Brassicales</taxon>
        <taxon>Brassicaceae</taxon>
        <taxon>Camelineae</taxon>
        <taxon>Arabidopsis</taxon>
    </lineage>
</organism>
<reference key="1">
    <citation type="journal article" date="2000" name="DNA Res.">
        <title>Structural analysis of Arabidopsis thaliana chromosome 3. I. Sequence features of the regions of 4,504,864 bp covered by sixty P1 and TAC clones.</title>
        <authorList>
            <person name="Sato S."/>
            <person name="Nakamura Y."/>
            <person name="Kaneko T."/>
            <person name="Katoh T."/>
            <person name="Asamizu E."/>
            <person name="Tabata S."/>
        </authorList>
    </citation>
    <scope>NUCLEOTIDE SEQUENCE [LARGE SCALE GENOMIC DNA]</scope>
    <source>
        <strain>cv. Columbia</strain>
    </source>
</reference>
<reference key="2">
    <citation type="journal article" date="2017" name="Plant J.">
        <title>Araport11: a complete reannotation of the Arabidopsis thaliana reference genome.</title>
        <authorList>
            <person name="Cheng C.Y."/>
            <person name="Krishnakumar V."/>
            <person name="Chan A.P."/>
            <person name="Thibaud-Nissen F."/>
            <person name="Schobel S."/>
            <person name="Town C.D."/>
        </authorList>
    </citation>
    <scope>GENOME REANNOTATION</scope>
    <source>
        <strain>cv. Columbia</strain>
    </source>
</reference>
<reference key="3">
    <citation type="journal article" date="2002" name="Science">
        <title>Functional annotation of a full-length Arabidopsis cDNA collection.</title>
        <authorList>
            <person name="Seki M."/>
            <person name="Narusaka M."/>
            <person name="Kamiya A."/>
            <person name="Ishida J."/>
            <person name="Satou M."/>
            <person name="Sakurai T."/>
            <person name="Nakajima M."/>
            <person name="Enju A."/>
            <person name="Akiyama K."/>
            <person name="Oono Y."/>
            <person name="Muramatsu M."/>
            <person name="Hayashizaki Y."/>
            <person name="Kawai J."/>
            <person name="Carninci P."/>
            <person name="Itoh M."/>
            <person name="Ishii Y."/>
            <person name="Arakawa T."/>
            <person name="Shibata K."/>
            <person name="Shinagawa A."/>
            <person name="Shinozaki K."/>
        </authorList>
    </citation>
    <scope>NUCLEOTIDE SEQUENCE [LARGE SCALE MRNA] (ISOFORM 2)</scope>
    <source>
        <strain>cv. Columbia</strain>
    </source>
</reference>
<reference key="4">
    <citation type="submission" date="2002-03" db="EMBL/GenBank/DDBJ databases">
        <title>Full-length cDNA from Arabidopsis thaliana.</title>
        <authorList>
            <person name="Brover V.V."/>
            <person name="Troukhan M.E."/>
            <person name="Alexandrov N.A."/>
            <person name="Lu Y.-P."/>
            <person name="Flavell R.B."/>
            <person name="Feldmann K.A."/>
        </authorList>
    </citation>
    <scope>NUCLEOTIDE SEQUENCE [LARGE SCALE MRNA] (ISOFORM 1)</scope>
</reference>
<evidence type="ECO:0000250" key="1"/>
<evidence type="ECO:0000303" key="2">
    <source>
    </source>
</evidence>
<evidence type="ECO:0000305" key="3"/>
<protein>
    <recommendedName>
        <fullName>Probable isoaspartyl peptidase/L-asparaginase 2</fullName>
        <ecNumber>3.4.19.5</ecNumber>
    </recommendedName>
    <alternativeName>
        <fullName>L-asparagine amidohydrolase 2</fullName>
    </alternativeName>
    <component>
        <recommendedName>
            <fullName>Isoaspartyl peptidase/L-asparaginase 2 subunit alpha</fullName>
        </recommendedName>
    </component>
    <component>
        <recommendedName>
            <fullName>Isoaspartyl peptidase/L-asparaginase 2 subunit beta</fullName>
        </recommendedName>
    </component>
</protein>
<name>ASPGB_ARATH</name>
<comment type="function">
    <text evidence="1">Acts in asparagine catabolism and also in the final steps of protein degradation via hydrolysis of a range of isoaspartyl dipeptides.</text>
</comment>
<comment type="catalytic activity">
    <reaction>
        <text>Cleavage of a beta-linked Asp residue from the N-terminus of a polypeptide.</text>
        <dbReference type="EC" id="3.4.19.5"/>
    </reaction>
</comment>
<comment type="subunit">
    <text evidence="1">Heterotetramer of two alpha and two beta chains arranged as a dimer of alpha/beta heterodimers.</text>
</comment>
<comment type="alternative products">
    <event type="alternative splicing"/>
    <isoform>
        <id>Q8GXG1-1</id>
        <name>1</name>
        <sequence type="displayed"/>
    </isoform>
    <isoform>
        <id>Q8GXG1-2</id>
        <name>2</name>
        <sequence type="described" ref="VSP_016936"/>
    </isoform>
</comment>
<comment type="PTM">
    <text evidence="1">Cleaved into an alpha and beta chain by autocatalysis; this activates the enzyme. The N-terminal residue of the beta subunit is responsible for the nucleophile hydrolase activity (By similarity).</text>
</comment>
<comment type="miscellaneous">
    <molecule>Isoform 2</molecule>
    <text evidence="3">May be due to intron retention.</text>
</comment>
<comment type="similarity">
    <text evidence="3">Belongs to the Ntn-hydrolase family.</text>
</comment>
<keyword id="KW-0025">Alternative splicing</keyword>
<keyword id="KW-0068">Autocatalytic cleavage</keyword>
<keyword id="KW-0378">Hydrolase</keyword>
<keyword id="KW-0645">Protease</keyword>
<keyword id="KW-1185">Reference proteome</keyword>
<gene>
    <name type="ordered locus">At3g16150</name>
    <name type="ORF">MSL1.19</name>
</gene>
<sequence>MGGWAIAVHGGAGIDPNLPAERQEEAKQLLTRCLNLGIIALRSNVSAIDVVELVIRELETDPLFNSGRGSALTEKGTVEMEASIMDGTKRRCGAVSGITTVKNPISLARLVMDKSPHSYLAFSGAEDFARKQGVEIVDNEYFVTDDNVGMLKLAKEANSILFDYRIPPMGCAGAAATDSPIQMNGLPISIYAPETVGCVVVDGKGHCAAGTSTGGLMNKMMGRIGDSPLIGAGTYASEFCGVSCTGEGEAIIRATLARDVSAVMEYKGLNLQEAVDYVIKHRLDEGFAGLIAVSNKGEVVCGFNSNGMFRGCATEDGFMEVAIWE</sequence>
<feature type="chain" id="PRO_0000045444" description="Isoaspartyl peptidase/L-asparaginase 2 subunit alpha">
    <location>
        <begin position="1"/>
        <end position="194"/>
    </location>
</feature>
<feature type="chain" id="PRO_0000045445" description="Isoaspartyl peptidase/L-asparaginase 2 subunit beta">
    <location>
        <begin position="195"/>
        <end position="325"/>
    </location>
</feature>
<feature type="active site" description="Nucleophile" evidence="1">
    <location>
        <position position="195"/>
    </location>
</feature>
<feature type="binding site" evidence="1">
    <location>
        <begin position="223"/>
        <end position="226"/>
    </location>
    <ligand>
        <name>substrate</name>
    </ligand>
</feature>
<feature type="binding site" evidence="1">
    <location>
        <begin position="245"/>
        <end position="248"/>
    </location>
    <ligand>
        <name>substrate</name>
    </ligand>
</feature>
<feature type="site" description="Cleavage; by autolysis" evidence="1">
    <location>
        <begin position="194"/>
        <end position="195"/>
    </location>
</feature>
<feature type="splice variant" id="VSP_016936" description="In isoform 2." evidence="2">
    <location>
        <begin position="1"/>
        <end position="149"/>
    </location>
</feature>
<accession>Q8GXG1</accession>
<accession>Q9LW72</accession>
<dbReference type="EC" id="3.4.19.5"/>
<dbReference type="EMBL" id="AB012247">
    <property type="protein sequence ID" value="BAB02681.1"/>
    <property type="molecule type" value="Genomic_DNA"/>
</dbReference>
<dbReference type="EMBL" id="CP002686">
    <property type="protein sequence ID" value="AEE75777.1"/>
    <property type="molecule type" value="Genomic_DNA"/>
</dbReference>
<dbReference type="EMBL" id="AK118259">
    <property type="protein sequence ID" value="BAC42877.1"/>
    <property type="molecule type" value="mRNA"/>
</dbReference>
<dbReference type="EMBL" id="AY086130">
    <property type="protein sequence ID" value="AAM63335.1"/>
    <property type="molecule type" value="mRNA"/>
</dbReference>
<dbReference type="RefSeq" id="NP_566536.1">
    <molecule id="Q8GXG1-1"/>
    <property type="nucleotide sequence ID" value="NM_112485.4"/>
</dbReference>
<dbReference type="SMR" id="Q8GXG1"/>
<dbReference type="BioGRID" id="6194">
    <property type="interactions" value="6"/>
</dbReference>
<dbReference type="FunCoup" id="Q8GXG1">
    <property type="interactions" value="318"/>
</dbReference>
<dbReference type="STRING" id="3702.Q8GXG1"/>
<dbReference type="MEROPS" id="T02.A02"/>
<dbReference type="PaxDb" id="3702-AT3G16150.1"/>
<dbReference type="ProteomicsDB" id="246804">
    <molecule id="Q8GXG1-1"/>
</dbReference>
<dbReference type="EnsemblPlants" id="AT3G16150.1">
    <molecule id="Q8GXG1-1"/>
    <property type="protein sequence ID" value="AT3G16150.1"/>
    <property type="gene ID" value="AT3G16150"/>
</dbReference>
<dbReference type="Gramene" id="AT3G16150.1">
    <molecule id="Q8GXG1-1"/>
    <property type="protein sequence ID" value="AT3G16150.1"/>
    <property type="gene ID" value="AT3G16150"/>
</dbReference>
<dbReference type="KEGG" id="ath:AT3G16150"/>
<dbReference type="Araport" id="AT3G16150"/>
<dbReference type="TAIR" id="AT3G16150">
    <property type="gene designation" value="ASPGB1"/>
</dbReference>
<dbReference type="eggNOG" id="KOG1592">
    <property type="taxonomic scope" value="Eukaryota"/>
</dbReference>
<dbReference type="HOGENOM" id="CLU_021603_1_2_1"/>
<dbReference type="InParanoid" id="Q8GXG1"/>
<dbReference type="OMA" id="YTYDGGH"/>
<dbReference type="OrthoDB" id="2262349at2759"/>
<dbReference type="PhylomeDB" id="Q8GXG1"/>
<dbReference type="BioCyc" id="ARA:AT3G16150-MONOMER"/>
<dbReference type="BRENDA" id="3.5.1.1">
    <property type="organism ID" value="399"/>
</dbReference>
<dbReference type="SABIO-RK" id="Q8GXG1"/>
<dbReference type="PRO" id="PR:Q8GXG1"/>
<dbReference type="Proteomes" id="UP000006548">
    <property type="component" value="Chromosome 3"/>
</dbReference>
<dbReference type="ExpressionAtlas" id="Q8GXG1">
    <property type="expression patterns" value="baseline and differential"/>
</dbReference>
<dbReference type="GO" id="GO:0004067">
    <property type="term" value="F:asparaginase activity"/>
    <property type="evidence" value="ECO:0000314"/>
    <property type="project" value="TAIR"/>
</dbReference>
<dbReference type="GO" id="GO:0008798">
    <property type="term" value="F:beta-aspartyl-peptidase activity"/>
    <property type="evidence" value="ECO:0007669"/>
    <property type="project" value="UniProtKB-EC"/>
</dbReference>
<dbReference type="GO" id="GO:0006508">
    <property type="term" value="P:proteolysis"/>
    <property type="evidence" value="ECO:0007669"/>
    <property type="project" value="UniProtKB-KW"/>
</dbReference>
<dbReference type="CDD" id="cd04701">
    <property type="entry name" value="Asparaginase_2"/>
    <property type="match status" value="1"/>
</dbReference>
<dbReference type="FunFam" id="3.60.20.30:FF:000001">
    <property type="entry name" value="Isoaspartyl peptidase/L-asparaginase"/>
    <property type="match status" value="1"/>
</dbReference>
<dbReference type="Gene3D" id="3.60.20.30">
    <property type="entry name" value="(Glycosyl)asparaginase"/>
    <property type="match status" value="1"/>
</dbReference>
<dbReference type="InterPro" id="IPR029055">
    <property type="entry name" value="Ntn_hydrolases_N"/>
</dbReference>
<dbReference type="InterPro" id="IPR000246">
    <property type="entry name" value="Peptidase_T2"/>
</dbReference>
<dbReference type="PANTHER" id="PTHR10188:SF13">
    <property type="entry name" value="ISOASPARTYL PEPTIDASE_L-ASPARAGINASE 2-RELATED"/>
    <property type="match status" value="1"/>
</dbReference>
<dbReference type="PANTHER" id="PTHR10188">
    <property type="entry name" value="L-ASPARAGINASE"/>
    <property type="match status" value="1"/>
</dbReference>
<dbReference type="Pfam" id="PF01112">
    <property type="entry name" value="Asparaginase_2"/>
    <property type="match status" value="1"/>
</dbReference>
<dbReference type="SUPFAM" id="SSF56235">
    <property type="entry name" value="N-terminal nucleophile aminohydrolases (Ntn hydrolases)"/>
    <property type="match status" value="1"/>
</dbReference>